<comment type="function">
    <text evidence="1">High affinity, high specificity proton-dependent sulfate transporter, which mediates sulfate uptake. Provides the sulfur source for the cysteine synthesis pathway.</text>
</comment>
<comment type="subcellular location">
    <subcellularLocation>
        <location evidence="1">Cell inner membrane</location>
        <topology evidence="1">Multi-pass membrane protein</topology>
    </subcellularLocation>
</comment>
<comment type="similarity">
    <text evidence="1">Belongs to the CysZ family.</text>
</comment>
<organism>
    <name type="scientific">Escherichia coli O1:K1 / APEC</name>
    <dbReference type="NCBI Taxonomy" id="405955"/>
    <lineage>
        <taxon>Bacteria</taxon>
        <taxon>Pseudomonadati</taxon>
        <taxon>Pseudomonadota</taxon>
        <taxon>Gammaproteobacteria</taxon>
        <taxon>Enterobacterales</taxon>
        <taxon>Enterobacteriaceae</taxon>
        <taxon>Escherichia</taxon>
    </lineage>
</organism>
<keyword id="KW-0028">Amino-acid biosynthesis</keyword>
<keyword id="KW-0997">Cell inner membrane</keyword>
<keyword id="KW-1003">Cell membrane</keyword>
<keyword id="KW-0198">Cysteine biosynthesis</keyword>
<keyword id="KW-0472">Membrane</keyword>
<keyword id="KW-1185">Reference proteome</keyword>
<keyword id="KW-0764">Sulfate transport</keyword>
<keyword id="KW-0812">Transmembrane</keyword>
<keyword id="KW-1133">Transmembrane helix</keyword>
<keyword id="KW-0813">Transport</keyword>
<gene>
    <name evidence="1" type="primary">cysZ</name>
    <name type="ordered locus">Ecok1_23260</name>
    <name type="ORF">APECO1_4132</name>
</gene>
<accession>A1ADT0</accession>
<evidence type="ECO:0000255" key="1">
    <source>
        <dbReference type="HAMAP-Rule" id="MF_00468"/>
    </source>
</evidence>
<name>CYSZ_ECOK1</name>
<proteinExistence type="inferred from homology"/>
<protein>
    <recommendedName>
        <fullName evidence="1">Sulfate transporter CysZ</fullName>
    </recommendedName>
</protein>
<feature type="chain" id="PRO_1000013710" description="Sulfate transporter CysZ">
    <location>
        <begin position="1"/>
        <end position="253"/>
    </location>
</feature>
<feature type="transmembrane region" description="Helical" evidence="1">
    <location>
        <begin position="31"/>
        <end position="51"/>
    </location>
</feature>
<feature type="transmembrane region" description="Helical" evidence="1">
    <location>
        <begin position="75"/>
        <end position="95"/>
    </location>
</feature>
<feature type="transmembrane region" description="Helical" evidence="1">
    <location>
        <begin position="151"/>
        <end position="171"/>
    </location>
</feature>
<feature type="transmembrane region" description="Helical" evidence="1">
    <location>
        <begin position="222"/>
        <end position="242"/>
    </location>
</feature>
<dbReference type="EMBL" id="CP000468">
    <property type="protein sequence ID" value="ABJ01820.1"/>
    <property type="molecule type" value="Genomic_DNA"/>
</dbReference>
<dbReference type="RefSeq" id="WP_000254839.1">
    <property type="nucleotide sequence ID" value="NZ_CADILS010000039.1"/>
</dbReference>
<dbReference type="SMR" id="A1ADT0"/>
<dbReference type="GeneID" id="93774718"/>
<dbReference type="KEGG" id="ecv:APECO1_4132"/>
<dbReference type="HOGENOM" id="CLU_070331_1_0_6"/>
<dbReference type="Proteomes" id="UP000008216">
    <property type="component" value="Chromosome"/>
</dbReference>
<dbReference type="GO" id="GO:0005886">
    <property type="term" value="C:plasma membrane"/>
    <property type="evidence" value="ECO:0007669"/>
    <property type="project" value="UniProtKB-SubCell"/>
</dbReference>
<dbReference type="GO" id="GO:0009675">
    <property type="term" value="F:high-affinity sulfate:proton symporter activity"/>
    <property type="evidence" value="ECO:0007669"/>
    <property type="project" value="TreeGrafter"/>
</dbReference>
<dbReference type="GO" id="GO:0019344">
    <property type="term" value="P:cysteine biosynthetic process"/>
    <property type="evidence" value="ECO:0007669"/>
    <property type="project" value="UniProtKB-UniRule"/>
</dbReference>
<dbReference type="GO" id="GO:0000103">
    <property type="term" value="P:sulfate assimilation"/>
    <property type="evidence" value="ECO:0007669"/>
    <property type="project" value="InterPro"/>
</dbReference>
<dbReference type="HAMAP" id="MF_00468">
    <property type="entry name" value="CysZ"/>
    <property type="match status" value="1"/>
</dbReference>
<dbReference type="InterPro" id="IPR050480">
    <property type="entry name" value="CysZ_sulfate_transptr"/>
</dbReference>
<dbReference type="InterPro" id="IPR022985">
    <property type="entry name" value="Sulfate_CysZ"/>
</dbReference>
<dbReference type="NCBIfam" id="NF003433">
    <property type="entry name" value="PRK04949.1"/>
    <property type="match status" value="1"/>
</dbReference>
<dbReference type="PANTHER" id="PTHR37468">
    <property type="entry name" value="SULFATE TRANSPORTER CYSZ"/>
    <property type="match status" value="1"/>
</dbReference>
<dbReference type="PANTHER" id="PTHR37468:SF1">
    <property type="entry name" value="SULFATE TRANSPORTER CYSZ"/>
    <property type="match status" value="1"/>
</dbReference>
<dbReference type="Pfam" id="PF07264">
    <property type="entry name" value="EI24"/>
    <property type="match status" value="1"/>
</dbReference>
<sequence>MVSSFTSAPRSGFYYFAQGWKLVSQPGIRRFVILPLLVNILLMGGAFWWLFTQLDVWIPTLMSYVPDWLQWLSYLLWPLAVISVLLVFGYFFSTIANWIAAPFNGLLAEQLEARLTGATPPDTGIFGIMKDVPRIMKREWQKFAWYLPRAIVLLILYFIPGIGQTVAPVLWFLFSAWMLAIQYCDYPFDNHKVPFKEMRTALRTRKITNMQFGALTSLFTMIPLLNLFIMPVAVCGATAMWVDCYRDKHAMWR</sequence>
<reference key="1">
    <citation type="journal article" date="2007" name="J. Bacteriol.">
        <title>The genome sequence of avian pathogenic Escherichia coli strain O1:K1:H7 shares strong similarities with human extraintestinal pathogenic E. coli genomes.</title>
        <authorList>
            <person name="Johnson T.J."/>
            <person name="Kariyawasam S."/>
            <person name="Wannemuehler Y."/>
            <person name="Mangiamele P."/>
            <person name="Johnson S.J."/>
            <person name="Doetkott C."/>
            <person name="Skyberg J.A."/>
            <person name="Lynne A.M."/>
            <person name="Johnson J.R."/>
            <person name="Nolan L.K."/>
        </authorList>
    </citation>
    <scope>NUCLEOTIDE SEQUENCE [LARGE SCALE GENOMIC DNA]</scope>
</reference>